<protein>
    <recommendedName>
        <fullName>Uncharacterized ferredoxin-like protein YfaE</fullName>
    </recommendedName>
</protein>
<comment type="cofactor">
    <cofactor evidence="2">
        <name>[2Fe-2S] cluster</name>
        <dbReference type="ChEBI" id="CHEBI:190135"/>
    </cofactor>
    <text evidence="2">Binds 1 [2Fe-2S] cluster.</text>
</comment>
<feature type="chain" id="PRO_0000189417" description="Uncharacterized ferredoxin-like protein YfaE">
    <location>
        <begin position="1"/>
        <end position="84"/>
    </location>
</feature>
<feature type="domain" description="2Fe-2S ferredoxin-type" evidence="1">
    <location>
        <begin position="2"/>
        <end position="84"/>
    </location>
</feature>
<feature type="binding site" evidence="1">
    <location>
        <position position="37"/>
    </location>
    <ligand>
        <name>[2Fe-2S] cluster</name>
        <dbReference type="ChEBI" id="CHEBI:190135"/>
    </ligand>
</feature>
<feature type="binding site" evidence="1">
    <location>
        <position position="42"/>
    </location>
    <ligand>
        <name>[2Fe-2S] cluster</name>
        <dbReference type="ChEBI" id="CHEBI:190135"/>
    </ligand>
</feature>
<feature type="binding site" evidence="1">
    <location>
        <position position="45"/>
    </location>
    <ligand>
        <name>[2Fe-2S] cluster</name>
        <dbReference type="ChEBI" id="CHEBI:190135"/>
    </ligand>
</feature>
<feature type="binding site" evidence="1">
    <location>
        <position position="74"/>
    </location>
    <ligand>
        <name>[2Fe-2S] cluster</name>
        <dbReference type="ChEBI" id="CHEBI:190135"/>
    </ligand>
</feature>
<keyword id="KW-0001">2Fe-2S</keyword>
<keyword id="KW-0249">Electron transport</keyword>
<keyword id="KW-0408">Iron</keyword>
<keyword id="KW-0411">Iron-sulfur</keyword>
<keyword id="KW-0479">Metal-binding</keyword>
<keyword id="KW-1185">Reference proteome</keyword>
<keyword id="KW-0813">Transport</keyword>
<dbReference type="EMBL" id="AE014075">
    <property type="protein sequence ID" value="AAN81232.1"/>
    <property type="molecule type" value="Genomic_DNA"/>
</dbReference>
<dbReference type="RefSeq" id="WP_000135040.1">
    <property type="nucleotide sequence ID" value="NZ_CP051263.1"/>
</dbReference>
<dbReference type="SMR" id="P0ABW4"/>
<dbReference type="STRING" id="199310.c2778"/>
<dbReference type="GeneID" id="93774939"/>
<dbReference type="KEGG" id="ecc:c2778"/>
<dbReference type="eggNOG" id="COG1018">
    <property type="taxonomic scope" value="Bacteria"/>
</dbReference>
<dbReference type="HOGENOM" id="CLU_082632_6_1_6"/>
<dbReference type="BioCyc" id="ECOL199310:C2778-MONOMER"/>
<dbReference type="Proteomes" id="UP000001410">
    <property type="component" value="Chromosome"/>
</dbReference>
<dbReference type="GO" id="GO:0051537">
    <property type="term" value="F:2 iron, 2 sulfur cluster binding"/>
    <property type="evidence" value="ECO:0007669"/>
    <property type="project" value="UniProtKB-KW"/>
</dbReference>
<dbReference type="GO" id="GO:0046872">
    <property type="term" value="F:metal ion binding"/>
    <property type="evidence" value="ECO:0007669"/>
    <property type="project" value="UniProtKB-KW"/>
</dbReference>
<dbReference type="CDD" id="cd00207">
    <property type="entry name" value="fer2"/>
    <property type="match status" value="1"/>
</dbReference>
<dbReference type="FunFam" id="3.10.20.30:FF:000011">
    <property type="entry name" value="2Fe-2S ferredoxin YfaE"/>
    <property type="match status" value="1"/>
</dbReference>
<dbReference type="Gene3D" id="3.10.20.30">
    <property type="match status" value="1"/>
</dbReference>
<dbReference type="InterPro" id="IPR036010">
    <property type="entry name" value="2Fe-2S_ferredoxin-like_sf"/>
</dbReference>
<dbReference type="InterPro" id="IPR001041">
    <property type="entry name" value="2Fe-2S_ferredoxin-type"/>
</dbReference>
<dbReference type="InterPro" id="IPR006058">
    <property type="entry name" value="2Fe2S_fd_BS"/>
</dbReference>
<dbReference type="InterPro" id="IPR012675">
    <property type="entry name" value="Beta-grasp_dom_sf"/>
</dbReference>
<dbReference type="NCBIfam" id="NF007985">
    <property type="entry name" value="PRK10713.1"/>
    <property type="match status" value="1"/>
</dbReference>
<dbReference type="Pfam" id="PF00111">
    <property type="entry name" value="Fer2"/>
    <property type="match status" value="1"/>
</dbReference>
<dbReference type="SUPFAM" id="SSF54292">
    <property type="entry name" value="2Fe-2S ferredoxin-like"/>
    <property type="match status" value="1"/>
</dbReference>
<dbReference type="PROSITE" id="PS00197">
    <property type="entry name" value="2FE2S_FER_1"/>
    <property type="match status" value="1"/>
</dbReference>
<dbReference type="PROSITE" id="PS51085">
    <property type="entry name" value="2FE2S_FER_2"/>
    <property type="match status" value="1"/>
</dbReference>
<gene>
    <name type="primary">yfaE</name>
    <name type="ordered locus">c2778</name>
</gene>
<reference key="1">
    <citation type="journal article" date="2002" name="Proc. Natl. Acad. Sci. U.S.A.">
        <title>Extensive mosaic structure revealed by the complete genome sequence of uropathogenic Escherichia coli.</title>
        <authorList>
            <person name="Welch R.A."/>
            <person name="Burland V."/>
            <person name="Plunkett G. III"/>
            <person name="Redford P."/>
            <person name="Roesch P."/>
            <person name="Rasko D."/>
            <person name="Buckles E.L."/>
            <person name="Liou S.-R."/>
            <person name="Boutin A."/>
            <person name="Hackett J."/>
            <person name="Stroud D."/>
            <person name="Mayhew G.F."/>
            <person name="Rose D.J."/>
            <person name="Zhou S."/>
            <person name="Schwartz D.C."/>
            <person name="Perna N.T."/>
            <person name="Mobley H.L.T."/>
            <person name="Donnenberg M.S."/>
            <person name="Blattner F.R."/>
        </authorList>
    </citation>
    <scope>NUCLEOTIDE SEQUENCE [LARGE SCALE GENOMIC DNA]</scope>
    <source>
        <strain>CFT073 / ATCC 700928 / UPEC</strain>
    </source>
</reference>
<accession>P0ABW4</accession>
<accession>P37910</accession>
<accession>P77220</accession>
<sequence length="84" mass="9293">MARVTLRITGTQLLCQDEHPSLLAALESHNVAVEYQCREGYCGSCRTRLVAGQVDWIAEPLAFIQPGEILPCCCRAKGDIEIEM</sequence>
<name>YFAE_ECOL6</name>
<evidence type="ECO:0000255" key="1">
    <source>
        <dbReference type="PROSITE-ProRule" id="PRU00465"/>
    </source>
</evidence>
<evidence type="ECO:0000305" key="2"/>
<organism>
    <name type="scientific">Escherichia coli O6:H1 (strain CFT073 / ATCC 700928 / UPEC)</name>
    <dbReference type="NCBI Taxonomy" id="199310"/>
    <lineage>
        <taxon>Bacteria</taxon>
        <taxon>Pseudomonadati</taxon>
        <taxon>Pseudomonadota</taxon>
        <taxon>Gammaproteobacteria</taxon>
        <taxon>Enterobacterales</taxon>
        <taxon>Enterobacteriaceae</taxon>
        <taxon>Escherichia</taxon>
    </lineage>
</organism>
<proteinExistence type="predicted"/>